<name>VPN5_BPPHE</name>
<protein>
    <recommendedName>
        <fullName evidence="2">Virion protein 5</fullName>
    </recommendedName>
</protein>
<organismHost>
    <name type="scientific">Enterococcus faecalis</name>
    <name type="common">Streptococcus faecalis</name>
    <dbReference type="NCBI Taxonomy" id="1351"/>
</organismHost>
<sequence length="140" mass="15487">MASVGNQTVHTGNTVYLMIGNKIIGRAQSASGERQYGTQGIYEIGSIMPQEHVYLKYEGTITLERMRMKKEDLASLGITALGEDILQRDIIDIVMMDNLTKEIVVAYRGCSAISYSESFTANEVTSESTQFTYLTSAKVK</sequence>
<organism>
    <name type="scientific">Enterococcus phage phiEF24C</name>
    <name type="common">Enterococcus bacteriophage phi-EF24C</name>
    <dbReference type="NCBI Taxonomy" id="442493"/>
    <lineage>
        <taxon>Viruses</taxon>
        <taxon>Duplodnaviria</taxon>
        <taxon>Heunggongvirae</taxon>
        <taxon>Uroviricota</taxon>
        <taxon>Caudoviricetes</taxon>
        <taxon>Herelleviridae</taxon>
        <taxon>Brockvirinae</taxon>
        <taxon>Kochikohdavirus</taxon>
        <taxon>Kochikohdavirus EF24C</taxon>
    </lineage>
</organism>
<accession>P85229</accession>
<accession>A8E276</accession>
<comment type="subcellular location">
    <subcellularLocation>
        <location evidence="1 3">Virion</location>
    </subcellularLocation>
</comment>
<reference evidence="4" key="1">
    <citation type="journal article" date="2008" name="Appl. Environ. Microbiol.">
        <title>In silico and in vivo evaluation of bacteriophage phiEF24C, a candidate for treatment of Enterococcus faecalis infections.</title>
        <authorList>
            <person name="Uchiyama J."/>
            <person name="Rashel M."/>
            <person name="Takemura I."/>
            <person name="Wakiguchi H."/>
            <person name="Matsuzaki S."/>
        </authorList>
    </citation>
    <scope>NUCLEOTIDE SEQUENCE [GENOMIC DNA]</scope>
</reference>
<reference evidence="3" key="2">
    <citation type="journal article" date="2008" name="FEMS Microbiol. Lett.">
        <title>Isolation and characterization of a novel Enterococcus faecalis bacteriophage phiEF24C as a therapeutic candidate.</title>
        <authorList>
            <person name="Uchiyama J."/>
            <person name="Rashel M."/>
            <person name="Maeda Y."/>
            <person name="Takemura I."/>
            <person name="Sugihara S."/>
            <person name="Akechi K."/>
            <person name="Muraoka A."/>
            <person name="Wakiguchi H."/>
            <person name="Matsuzaki S."/>
        </authorList>
    </citation>
    <scope>PROTEIN SEQUENCE OF 2-11</scope>
</reference>
<keyword id="KW-0903">Direct protein sequencing</keyword>
<keyword id="KW-1185">Reference proteome</keyword>
<keyword id="KW-0946">Virion</keyword>
<feature type="initiator methionine" description="Removed" evidence="1">
    <location>
        <position position="1"/>
    </location>
</feature>
<feature type="chain" id="PRO_0000302099" description="Virion protein 5" evidence="1">
    <location>
        <begin position="2"/>
        <end position="140"/>
    </location>
</feature>
<dbReference type="EMBL" id="AP009390">
    <property type="protein sequence ID" value="BAF81292.1"/>
    <property type="molecule type" value="Genomic_DNA"/>
</dbReference>
<dbReference type="RefSeq" id="YP_001504133.1">
    <property type="nucleotide sequence ID" value="NC_009904.1"/>
</dbReference>
<dbReference type="SMR" id="P85229"/>
<dbReference type="GeneID" id="5666358"/>
<dbReference type="KEGG" id="vg:5666358"/>
<dbReference type="OrthoDB" id="12940at10239"/>
<dbReference type="Proteomes" id="UP000001151">
    <property type="component" value="Genome"/>
</dbReference>
<dbReference type="GO" id="GO:0044423">
    <property type="term" value="C:virion component"/>
    <property type="evidence" value="ECO:0007669"/>
    <property type="project" value="UniProtKB-KW"/>
</dbReference>
<evidence type="ECO:0000269" key="1">
    <source>
    </source>
</evidence>
<evidence type="ECO:0000303" key="2">
    <source>
    </source>
</evidence>
<evidence type="ECO:0000305" key="3"/>
<evidence type="ECO:0000312" key="4">
    <source>
        <dbReference type="EMBL" id="BAF81292.1"/>
    </source>
</evidence>
<proteinExistence type="evidence at protein level"/>